<organism>
    <name type="scientific">Schizosaccharomyces pombe (strain 972 / ATCC 24843)</name>
    <name type="common">Fission yeast</name>
    <dbReference type="NCBI Taxonomy" id="284812"/>
    <lineage>
        <taxon>Eukaryota</taxon>
        <taxon>Fungi</taxon>
        <taxon>Dikarya</taxon>
        <taxon>Ascomycota</taxon>
        <taxon>Taphrinomycotina</taxon>
        <taxon>Schizosaccharomycetes</taxon>
        <taxon>Schizosaccharomycetales</taxon>
        <taxon>Schizosaccharomycetaceae</taxon>
        <taxon>Schizosaccharomyces</taxon>
    </lineage>
</organism>
<gene>
    <name type="ORF">SPAC19B12.06c</name>
</gene>
<comment type="subcellular location">
    <subcellularLocation>
        <location evidence="3">Golgi apparatus membrane</location>
        <topology evidence="3">Multi-pass membrane protein</topology>
    </subcellularLocation>
</comment>
<comment type="similarity">
    <text evidence="4">Belongs to the peptidase S54 family.</text>
</comment>
<name>YLM6_SCHPO</name>
<proteinExistence type="inferred from homology"/>
<feature type="chain" id="PRO_0000317207" description="Uncharacterized rhomboid protein C19B12.06c">
    <location>
        <begin position="1"/>
        <end position="258"/>
    </location>
</feature>
<feature type="transmembrane region" description="Helical" evidence="2">
    <location>
        <begin position="24"/>
        <end position="44"/>
    </location>
</feature>
<feature type="transmembrane region" description="Helical" evidence="2">
    <location>
        <begin position="70"/>
        <end position="90"/>
    </location>
</feature>
<feature type="transmembrane region" description="Helical" evidence="2">
    <location>
        <begin position="100"/>
        <end position="120"/>
    </location>
</feature>
<feature type="transmembrane region" description="Helical" evidence="2">
    <location>
        <begin position="130"/>
        <end position="150"/>
    </location>
</feature>
<feature type="transmembrane region" description="Helical" evidence="2">
    <location>
        <begin position="157"/>
        <end position="177"/>
    </location>
</feature>
<feature type="transmembrane region" description="Helical" evidence="2">
    <location>
        <begin position="181"/>
        <end position="201"/>
    </location>
</feature>
<feature type="active site" evidence="1">
    <location>
        <position position="188"/>
    </location>
</feature>
<evidence type="ECO:0000250" key="1"/>
<evidence type="ECO:0000255" key="2"/>
<evidence type="ECO:0000269" key="3">
    <source>
    </source>
</evidence>
<evidence type="ECO:0000305" key="4"/>
<keyword id="KW-0333">Golgi apparatus</keyword>
<keyword id="KW-0378">Hydrolase</keyword>
<keyword id="KW-0472">Membrane</keyword>
<keyword id="KW-0645">Protease</keyword>
<keyword id="KW-1185">Reference proteome</keyword>
<keyword id="KW-0720">Serine protease</keyword>
<keyword id="KW-0812">Transmembrane</keyword>
<keyword id="KW-1133">Transmembrane helix</keyword>
<reference key="1">
    <citation type="journal article" date="2002" name="Nature">
        <title>The genome sequence of Schizosaccharomyces pombe.</title>
        <authorList>
            <person name="Wood V."/>
            <person name="Gwilliam R."/>
            <person name="Rajandream M.A."/>
            <person name="Lyne M.H."/>
            <person name="Lyne R."/>
            <person name="Stewart A."/>
            <person name="Sgouros J.G."/>
            <person name="Peat N."/>
            <person name="Hayles J."/>
            <person name="Baker S.G."/>
            <person name="Basham D."/>
            <person name="Bowman S."/>
            <person name="Brooks K."/>
            <person name="Brown D."/>
            <person name="Brown S."/>
            <person name="Chillingworth T."/>
            <person name="Churcher C.M."/>
            <person name="Collins M."/>
            <person name="Connor R."/>
            <person name="Cronin A."/>
            <person name="Davis P."/>
            <person name="Feltwell T."/>
            <person name="Fraser A."/>
            <person name="Gentles S."/>
            <person name="Goble A."/>
            <person name="Hamlin N."/>
            <person name="Harris D.E."/>
            <person name="Hidalgo J."/>
            <person name="Hodgson G."/>
            <person name="Holroyd S."/>
            <person name="Hornsby T."/>
            <person name="Howarth S."/>
            <person name="Huckle E.J."/>
            <person name="Hunt S."/>
            <person name="Jagels K."/>
            <person name="James K.D."/>
            <person name="Jones L."/>
            <person name="Jones M."/>
            <person name="Leather S."/>
            <person name="McDonald S."/>
            <person name="McLean J."/>
            <person name="Mooney P."/>
            <person name="Moule S."/>
            <person name="Mungall K.L."/>
            <person name="Murphy L.D."/>
            <person name="Niblett D."/>
            <person name="Odell C."/>
            <person name="Oliver K."/>
            <person name="O'Neil S."/>
            <person name="Pearson D."/>
            <person name="Quail M.A."/>
            <person name="Rabbinowitsch E."/>
            <person name="Rutherford K.M."/>
            <person name="Rutter S."/>
            <person name="Saunders D."/>
            <person name="Seeger K."/>
            <person name="Sharp S."/>
            <person name="Skelton J."/>
            <person name="Simmonds M.N."/>
            <person name="Squares R."/>
            <person name="Squares S."/>
            <person name="Stevens K."/>
            <person name="Taylor K."/>
            <person name="Taylor R.G."/>
            <person name="Tivey A."/>
            <person name="Walsh S.V."/>
            <person name="Warren T."/>
            <person name="Whitehead S."/>
            <person name="Woodward J.R."/>
            <person name="Volckaert G."/>
            <person name="Aert R."/>
            <person name="Robben J."/>
            <person name="Grymonprez B."/>
            <person name="Weltjens I."/>
            <person name="Vanstreels E."/>
            <person name="Rieger M."/>
            <person name="Schaefer M."/>
            <person name="Mueller-Auer S."/>
            <person name="Gabel C."/>
            <person name="Fuchs M."/>
            <person name="Duesterhoeft A."/>
            <person name="Fritzc C."/>
            <person name="Holzer E."/>
            <person name="Moestl D."/>
            <person name="Hilbert H."/>
            <person name="Borzym K."/>
            <person name="Langer I."/>
            <person name="Beck A."/>
            <person name="Lehrach H."/>
            <person name="Reinhardt R."/>
            <person name="Pohl T.M."/>
            <person name="Eger P."/>
            <person name="Zimmermann W."/>
            <person name="Wedler H."/>
            <person name="Wambutt R."/>
            <person name="Purnelle B."/>
            <person name="Goffeau A."/>
            <person name="Cadieu E."/>
            <person name="Dreano S."/>
            <person name="Gloux S."/>
            <person name="Lelaure V."/>
            <person name="Mottier S."/>
            <person name="Galibert F."/>
            <person name="Aves S.J."/>
            <person name="Xiang Z."/>
            <person name="Hunt C."/>
            <person name="Moore K."/>
            <person name="Hurst S.M."/>
            <person name="Lucas M."/>
            <person name="Rochet M."/>
            <person name="Gaillardin C."/>
            <person name="Tallada V.A."/>
            <person name="Garzon A."/>
            <person name="Thode G."/>
            <person name="Daga R.R."/>
            <person name="Cruzado L."/>
            <person name="Jimenez J."/>
            <person name="Sanchez M."/>
            <person name="del Rey F."/>
            <person name="Benito J."/>
            <person name="Dominguez A."/>
            <person name="Revuelta J.L."/>
            <person name="Moreno S."/>
            <person name="Armstrong J."/>
            <person name="Forsburg S.L."/>
            <person name="Cerutti L."/>
            <person name="Lowe T."/>
            <person name="McCombie W.R."/>
            <person name="Paulsen I."/>
            <person name="Potashkin J."/>
            <person name="Shpakovski G.V."/>
            <person name="Ussery D."/>
            <person name="Barrell B.G."/>
            <person name="Nurse P."/>
        </authorList>
    </citation>
    <scope>NUCLEOTIDE SEQUENCE [LARGE SCALE GENOMIC DNA]</scope>
    <source>
        <strain>972 / ATCC 24843</strain>
    </source>
</reference>
<reference key="2">
    <citation type="journal article" date="2006" name="Nat. Biotechnol.">
        <title>ORFeome cloning and global analysis of protein localization in the fission yeast Schizosaccharomyces pombe.</title>
        <authorList>
            <person name="Matsuyama A."/>
            <person name="Arai R."/>
            <person name="Yashiroda Y."/>
            <person name="Shirai A."/>
            <person name="Kamata A."/>
            <person name="Sekido S."/>
            <person name="Kobayashi Y."/>
            <person name="Hashimoto A."/>
            <person name="Hamamoto M."/>
            <person name="Hiraoka Y."/>
            <person name="Horinouchi S."/>
            <person name="Yoshida M."/>
        </authorList>
    </citation>
    <scope>SUBCELLULAR LOCATION [LARGE SCALE ANALYSIS]</scope>
</reference>
<dbReference type="EC" id="3.4.21.-"/>
<dbReference type="EMBL" id="CU329670">
    <property type="protein sequence ID" value="CAC00554.2"/>
    <property type="molecule type" value="Genomic_DNA"/>
</dbReference>
<dbReference type="BioGRID" id="278871">
    <property type="interactions" value="11"/>
</dbReference>
<dbReference type="STRING" id="284812.Q9P375"/>
<dbReference type="PaxDb" id="4896-SPAC19B12.06c.1"/>
<dbReference type="EnsemblFungi" id="SPAC19B12.06c.1">
    <property type="protein sequence ID" value="SPAC19B12.06c.1:pep"/>
    <property type="gene ID" value="SPAC19B12.06c"/>
</dbReference>
<dbReference type="KEGG" id="spo:2542407"/>
<dbReference type="PomBase" id="SPAC19B12.06c"/>
<dbReference type="VEuPathDB" id="FungiDB:SPAC19B12.06c"/>
<dbReference type="eggNOG" id="KOG2632">
    <property type="taxonomic scope" value="Eukaryota"/>
</dbReference>
<dbReference type="HOGENOM" id="CLU_1082426_0_0_1"/>
<dbReference type="InParanoid" id="Q9P375"/>
<dbReference type="OMA" id="NTYPIVH"/>
<dbReference type="PhylomeDB" id="Q9P375"/>
<dbReference type="PRO" id="PR:Q9P375"/>
<dbReference type="Proteomes" id="UP000002485">
    <property type="component" value="Chromosome I"/>
</dbReference>
<dbReference type="GO" id="GO:0030137">
    <property type="term" value="C:COPI-coated vesicle"/>
    <property type="evidence" value="ECO:0000266"/>
    <property type="project" value="PomBase"/>
</dbReference>
<dbReference type="GO" id="GO:0005794">
    <property type="term" value="C:Golgi apparatus"/>
    <property type="evidence" value="ECO:0007005"/>
    <property type="project" value="PomBase"/>
</dbReference>
<dbReference type="GO" id="GO:0000139">
    <property type="term" value="C:Golgi membrane"/>
    <property type="evidence" value="ECO:0007669"/>
    <property type="project" value="UniProtKB-SubCell"/>
</dbReference>
<dbReference type="GO" id="GO:0004252">
    <property type="term" value="F:serine-type endopeptidase activity"/>
    <property type="evidence" value="ECO:0000318"/>
    <property type="project" value="GO_Central"/>
</dbReference>
<dbReference type="GO" id="GO:0006508">
    <property type="term" value="P:proteolysis"/>
    <property type="evidence" value="ECO:0007669"/>
    <property type="project" value="UniProtKB-KW"/>
</dbReference>
<dbReference type="Gene3D" id="1.20.1540.10">
    <property type="entry name" value="Rhomboid-like"/>
    <property type="match status" value="1"/>
</dbReference>
<dbReference type="InterPro" id="IPR022764">
    <property type="entry name" value="Peptidase_S54_rhomboid_dom"/>
</dbReference>
<dbReference type="InterPro" id="IPR035952">
    <property type="entry name" value="Rhomboid-like_sf"/>
</dbReference>
<dbReference type="Pfam" id="PF01694">
    <property type="entry name" value="Rhomboid"/>
    <property type="match status" value="1"/>
</dbReference>
<dbReference type="SUPFAM" id="SSF144091">
    <property type="entry name" value="Rhomboid-like"/>
    <property type="match status" value="1"/>
</dbReference>
<protein>
    <recommendedName>
        <fullName>Uncharacterized rhomboid protein C19B12.06c</fullName>
        <ecNumber>3.4.21.-</ecNumber>
    </recommendedName>
</protein>
<sequence>MAIELGERISTSVGFLAELFLMKIPLFTVIVALLTIILGIVNIFLPIVDFFGLSWHNLINIRLHTLNTYPLVHHGVISFILGLLGIFLLMPRFERRYGTLCTIAMFFGFLEVIPAIAYLIACYVAESDDVYVGIGGWVYSLLAMYLLNLFGDLHPKLLNLPQVVRMALALVAPVLGLPLDFSITIVLHLTAVVISIIFSFAYMDFFLPRGGFLVWVETKFSKIIDAIPNYISVTEAAYYQADGAIPIQDLGSNSSGIV</sequence>
<accession>Q9P375</accession>